<keyword id="KW-1003">Cell membrane</keyword>
<keyword id="KW-0472">Membrane</keyword>
<keyword id="KW-1185">Reference proteome</keyword>
<keyword id="KW-0812">Transmembrane</keyword>
<keyword id="KW-1133">Transmembrane helix</keyword>
<comment type="subcellular location">
    <subcellularLocation>
        <location evidence="1">Cell membrane</location>
        <topology evidence="1">Multi-pass membrane protein</topology>
    </subcellularLocation>
</comment>
<comment type="similarity">
    <text evidence="1">Belongs to the UPF0295 family.</text>
</comment>
<organism>
    <name type="scientific">Bacillus licheniformis (strain ATCC 14580 / DSM 13 / JCM 2505 / CCUG 7422 / NBRC 12200 / NCIMB 9375 / NCTC 10341 / NRRL NRS-1264 / Gibson 46)</name>
    <dbReference type="NCBI Taxonomy" id="279010"/>
    <lineage>
        <taxon>Bacteria</taxon>
        <taxon>Bacillati</taxon>
        <taxon>Bacillota</taxon>
        <taxon>Bacilli</taxon>
        <taxon>Bacillales</taxon>
        <taxon>Bacillaceae</taxon>
        <taxon>Bacillus</taxon>
    </lineage>
</organism>
<dbReference type="EMBL" id="AE017333">
    <property type="protein sequence ID" value="AAU39835.1"/>
    <property type="molecule type" value="Genomic_DNA"/>
</dbReference>
<dbReference type="EMBL" id="CP000002">
    <property type="protein sequence ID" value="AAU22487.2"/>
    <property type="molecule type" value="Genomic_DNA"/>
</dbReference>
<dbReference type="RefSeq" id="WP_003179962.1">
    <property type="nucleotide sequence ID" value="NC_006322.1"/>
</dbReference>
<dbReference type="STRING" id="279010.BL05075"/>
<dbReference type="KEGG" id="bld:BLi00901"/>
<dbReference type="KEGG" id="bli:BL05075"/>
<dbReference type="eggNOG" id="ENOG50313Y4">
    <property type="taxonomic scope" value="Bacteria"/>
</dbReference>
<dbReference type="HOGENOM" id="CLU_143991_0_0_9"/>
<dbReference type="Proteomes" id="UP000000606">
    <property type="component" value="Chromosome"/>
</dbReference>
<dbReference type="GO" id="GO:0005886">
    <property type="term" value="C:plasma membrane"/>
    <property type="evidence" value="ECO:0007669"/>
    <property type="project" value="UniProtKB-SubCell"/>
</dbReference>
<dbReference type="HAMAP" id="MF_01502">
    <property type="entry name" value="UPF0295"/>
    <property type="match status" value="1"/>
</dbReference>
<dbReference type="InterPro" id="IPR020912">
    <property type="entry name" value="UPF0295"/>
</dbReference>
<dbReference type="NCBIfam" id="NF002796">
    <property type="entry name" value="PRK02935.1"/>
    <property type="match status" value="1"/>
</dbReference>
<dbReference type="Pfam" id="PF11023">
    <property type="entry name" value="DUF2614"/>
    <property type="match status" value="1"/>
</dbReference>
<evidence type="ECO:0000255" key="1">
    <source>
        <dbReference type="HAMAP-Rule" id="MF_01502"/>
    </source>
</evidence>
<sequence length="115" mass="13101">MAKYSSKINKIRTFALSLVFIGFIIMYVGVFFRSSVLLMSVFMILGVLSILLSTAVYFWIGMLSTKAVQVVCPNCEKPTKILGRVDMCMHCREPLTLDKNLEGKEFNESYNRKSQ</sequence>
<protein>
    <recommendedName>
        <fullName evidence="1">UPF0295 protein BLi00901/BL05075</fullName>
    </recommendedName>
</protein>
<reference key="1">
    <citation type="journal article" date="2004" name="J. Mol. Microbiol. Biotechnol.">
        <title>The complete genome sequence of Bacillus licheniformis DSM13, an organism with great industrial potential.</title>
        <authorList>
            <person name="Veith B."/>
            <person name="Herzberg C."/>
            <person name="Steckel S."/>
            <person name="Feesche J."/>
            <person name="Maurer K.H."/>
            <person name="Ehrenreich P."/>
            <person name="Baeumer S."/>
            <person name="Henne A."/>
            <person name="Liesegang H."/>
            <person name="Merkl R."/>
            <person name="Ehrenreich A."/>
            <person name="Gottschalk G."/>
        </authorList>
    </citation>
    <scope>NUCLEOTIDE SEQUENCE [LARGE SCALE GENOMIC DNA]</scope>
    <source>
        <strain>ATCC 14580 / DSM 13 / JCM 2505 / CCUG 7422 / NBRC 12200 / NCIMB 9375 / NCTC 10341 / NRRL NRS-1264 / Gibson 46</strain>
    </source>
</reference>
<reference key="2">
    <citation type="journal article" date="2004" name="Genome Biol.">
        <title>Complete genome sequence of the industrial bacterium Bacillus licheniformis and comparisons with closely related Bacillus species.</title>
        <authorList>
            <person name="Rey M.W."/>
            <person name="Ramaiya P."/>
            <person name="Nelson B.A."/>
            <person name="Brody-Karpin S.D."/>
            <person name="Zaretsky E.J."/>
            <person name="Tang M."/>
            <person name="Lopez de Leon A."/>
            <person name="Xiang H."/>
            <person name="Gusti V."/>
            <person name="Clausen I.G."/>
            <person name="Olsen P.B."/>
            <person name="Rasmussen M.D."/>
            <person name="Andersen J.T."/>
            <person name="Joergensen P.L."/>
            <person name="Larsen T.S."/>
            <person name="Sorokin A."/>
            <person name="Bolotin A."/>
            <person name="Lapidus A."/>
            <person name="Galleron N."/>
            <person name="Ehrlich S.D."/>
            <person name="Berka R.M."/>
        </authorList>
    </citation>
    <scope>NUCLEOTIDE SEQUENCE [LARGE SCALE GENOMIC DNA]</scope>
    <source>
        <strain>ATCC 14580 / DSM 13 / JCM 2505 / CCUG 7422 / NBRC 12200 / NCIMB 9375 / NCTC 10341 / NRRL NRS-1264 / Gibson 46</strain>
    </source>
</reference>
<reference key="3">
    <citation type="submission" date="2007-04" db="EMBL/GenBank/DDBJ databases">
        <authorList>
            <person name="Berka R.M."/>
            <person name="Rey M.W."/>
            <person name="Ramaiya P."/>
        </authorList>
    </citation>
    <scope>SEQUENCE REVISION</scope>
</reference>
<gene>
    <name type="ordered locus">BLi00901</name>
    <name type="ordered locus">BL05075</name>
</gene>
<accession>Q65M79</accession>
<accession>Q62XM1</accession>
<name>Y901_BACLD</name>
<proteinExistence type="inferred from homology"/>
<feature type="chain" id="PRO_0000053853" description="UPF0295 protein BLi00901/BL05075">
    <location>
        <begin position="1"/>
        <end position="115"/>
    </location>
</feature>
<feature type="transmembrane region" description="Helical" evidence="1">
    <location>
        <begin position="18"/>
        <end position="38"/>
    </location>
</feature>
<feature type="transmembrane region" description="Helical" evidence="1">
    <location>
        <begin position="41"/>
        <end position="61"/>
    </location>
</feature>